<name>CM3F_CONRE</name>
<comment type="subcellular location">
    <subcellularLocation>
        <location evidence="3">Secreted</location>
    </subcellularLocation>
</comment>
<comment type="tissue specificity">
    <text evidence="6">Expressed by the venom duct.</text>
</comment>
<comment type="domain">
    <text evidence="5">The cysteine framework is III (CC-C-C-CC). Classified in the M-1 branch, since 1 residue stands between the fourth and the fifth cysteine residues.</text>
</comment>
<comment type="mass spectrometry" mass="1823.0" method="MALDI" evidence="3"/>
<comment type="similarity">
    <text evidence="5">Belongs to the conotoxin M superfamily.</text>
</comment>
<sequence length="69" mass="7612">MMSKLGVLLTICLLLFPLSALPLDGDQPADQPAERMQDISPEQNPLFHPDKRGCCPFPACTTHIICRCC</sequence>
<organism>
    <name type="scientific">Conus regius</name>
    <name type="common">Crown cone</name>
    <dbReference type="NCBI Taxonomy" id="101314"/>
    <lineage>
        <taxon>Eukaryota</taxon>
        <taxon>Metazoa</taxon>
        <taxon>Spiralia</taxon>
        <taxon>Lophotrochozoa</taxon>
        <taxon>Mollusca</taxon>
        <taxon>Gastropoda</taxon>
        <taxon>Caenogastropoda</taxon>
        <taxon>Neogastropoda</taxon>
        <taxon>Conoidea</taxon>
        <taxon>Conidae</taxon>
        <taxon>Conus</taxon>
        <taxon>Stephanoconus</taxon>
    </lineage>
</organism>
<protein>
    <recommendedName>
        <fullName evidence="4">Conotoxin reg3f</fullName>
    </recommendedName>
    <alternativeName>
        <fullName evidence="4">Reg3.2</fullName>
        <shortName evidence="7">Rg3.2</shortName>
    </alternativeName>
</protein>
<accession>A0A2I6EDM8</accession>
<feature type="signal peptide" evidence="2">
    <location>
        <begin position="1"/>
        <end position="20"/>
    </location>
</feature>
<feature type="propeptide" id="PRO_0000444762" evidence="3">
    <location>
        <begin position="21"/>
        <end position="52"/>
    </location>
</feature>
<feature type="peptide" id="PRO_5014339069" description="Conotoxin reg3f" evidence="3">
    <location>
        <begin position="53"/>
        <end position="69"/>
    </location>
</feature>
<feature type="modified residue" description="Cysteine amide" evidence="3">
    <location>
        <position position="69"/>
    </location>
</feature>
<feature type="disulfide bond" evidence="1">
    <location>
        <begin position="54"/>
        <end position="68"/>
    </location>
</feature>
<feature type="disulfide bond" evidence="1">
    <location>
        <begin position="55"/>
        <end position="66"/>
    </location>
</feature>
<feature type="disulfide bond" evidence="1">
    <location>
        <begin position="60"/>
        <end position="69"/>
    </location>
</feature>
<feature type="non-terminal residue" evidence="7">
    <location>
        <position position="69"/>
    </location>
</feature>
<reference key="1">
    <citation type="journal article" date="2017" name="FEBS J.">
        <title>Structural plasticity of Mini-M conotoxins: expression of all mini-M subtypes by Conus regius.</title>
        <authorList>
            <person name="Franco A."/>
            <person name="Dovell S."/>
            <person name="Moller C."/>
            <person name="Grandal M."/>
            <person name="Clark E."/>
            <person name="Mari F."/>
        </authorList>
    </citation>
    <scope>NUCLEOTIDE SEQUENCE [MRNA]</scope>
    <scope>PROTEIN SEQUENCE OF 53-69</scope>
    <scope>AMIDATION AT CYS-69</scope>
    <scope>MASS SPECTROMETRY</scope>
    <scope>SUBCELLULAR LOCATION</scope>
    <source>
        <tissue>Venom</tissue>
        <tissue>Venom duct</tissue>
    </source>
</reference>
<dbReference type="EMBL" id="MF588936">
    <property type="protein sequence ID" value="AUJ88060.1"/>
    <property type="molecule type" value="mRNA"/>
</dbReference>
<dbReference type="GO" id="GO:0005576">
    <property type="term" value="C:extracellular region"/>
    <property type="evidence" value="ECO:0007669"/>
    <property type="project" value="UniProtKB-SubCell"/>
</dbReference>
<dbReference type="GO" id="GO:0008200">
    <property type="term" value="F:ion channel inhibitor activity"/>
    <property type="evidence" value="ECO:0007669"/>
    <property type="project" value="InterPro"/>
</dbReference>
<dbReference type="GO" id="GO:0090729">
    <property type="term" value="F:toxin activity"/>
    <property type="evidence" value="ECO:0007669"/>
    <property type="project" value="UniProtKB-KW"/>
</dbReference>
<dbReference type="InterPro" id="IPR004214">
    <property type="entry name" value="Conotoxin"/>
</dbReference>
<dbReference type="Pfam" id="PF02950">
    <property type="entry name" value="Conotoxin"/>
    <property type="match status" value="1"/>
</dbReference>
<evidence type="ECO:0000250" key="1">
    <source>
        <dbReference type="UniProtKB" id="Q5EHP3"/>
    </source>
</evidence>
<evidence type="ECO:0000255" key="2"/>
<evidence type="ECO:0000269" key="3">
    <source>
    </source>
</evidence>
<evidence type="ECO:0000303" key="4">
    <source>
    </source>
</evidence>
<evidence type="ECO:0000305" key="5"/>
<evidence type="ECO:0000305" key="6">
    <source>
    </source>
</evidence>
<evidence type="ECO:0000312" key="7">
    <source>
        <dbReference type="EMBL" id="AUJ88060.1"/>
    </source>
</evidence>
<proteinExistence type="evidence at protein level"/>
<keyword id="KW-0027">Amidation</keyword>
<keyword id="KW-0165">Cleavage on pair of basic residues</keyword>
<keyword id="KW-0903">Direct protein sequencing</keyword>
<keyword id="KW-1015">Disulfide bond</keyword>
<keyword id="KW-0964">Secreted</keyword>
<keyword id="KW-0732">Signal</keyword>
<keyword id="KW-0800">Toxin</keyword>